<reference key="1">
    <citation type="journal article" date="2006" name="J. Bacteriol.">
        <title>Whole-genome sequence of Listeria welshimeri reveals common steps in genome reduction with Listeria innocua as compared to Listeria monocytogenes.</title>
        <authorList>
            <person name="Hain T."/>
            <person name="Steinweg C."/>
            <person name="Kuenne C.T."/>
            <person name="Billion A."/>
            <person name="Ghai R."/>
            <person name="Chatterjee S.S."/>
            <person name="Domann E."/>
            <person name="Kaerst U."/>
            <person name="Goesmann A."/>
            <person name="Bekel T."/>
            <person name="Bartels D."/>
            <person name="Kaiser O."/>
            <person name="Meyer F."/>
            <person name="Puehler A."/>
            <person name="Weisshaar B."/>
            <person name="Wehland J."/>
            <person name="Liang C."/>
            <person name="Dandekar T."/>
            <person name="Lampidis R."/>
            <person name="Kreft J."/>
            <person name="Goebel W."/>
            <person name="Chakraborty T."/>
        </authorList>
    </citation>
    <scope>NUCLEOTIDE SEQUENCE [LARGE SCALE GENOMIC DNA]</scope>
    <source>
        <strain>ATCC 35897 / DSM 20650 / CCUG 15529 / CIP 8149 / NCTC 11857 / SLCC 5334 / V8</strain>
    </source>
</reference>
<dbReference type="EC" id="4.2.1.33" evidence="1"/>
<dbReference type="EMBL" id="AM263198">
    <property type="protein sequence ID" value="CAK21426.1"/>
    <property type="molecule type" value="Genomic_DNA"/>
</dbReference>
<dbReference type="RefSeq" id="WP_011702773.1">
    <property type="nucleotide sequence ID" value="NC_008555.1"/>
</dbReference>
<dbReference type="SMR" id="A0AK94"/>
<dbReference type="STRING" id="386043.lwe2008"/>
<dbReference type="GeneID" id="61189908"/>
<dbReference type="KEGG" id="lwe:lwe2008"/>
<dbReference type="eggNOG" id="COG0065">
    <property type="taxonomic scope" value="Bacteria"/>
</dbReference>
<dbReference type="HOGENOM" id="CLU_006714_3_4_9"/>
<dbReference type="OrthoDB" id="9802769at2"/>
<dbReference type="UniPathway" id="UPA00048">
    <property type="reaction ID" value="UER00071"/>
</dbReference>
<dbReference type="Proteomes" id="UP000000779">
    <property type="component" value="Chromosome"/>
</dbReference>
<dbReference type="GO" id="GO:0003861">
    <property type="term" value="F:3-isopropylmalate dehydratase activity"/>
    <property type="evidence" value="ECO:0007669"/>
    <property type="project" value="UniProtKB-UniRule"/>
</dbReference>
<dbReference type="GO" id="GO:0051539">
    <property type="term" value="F:4 iron, 4 sulfur cluster binding"/>
    <property type="evidence" value="ECO:0007669"/>
    <property type="project" value="UniProtKB-KW"/>
</dbReference>
<dbReference type="GO" id="GO:0046872">
    <property type="term" value="F:metal ion binding"/>
    <property type="evidence" value="ECO:0007669"/>
    <property type="project" value="UniProtKB-KW"/>
</dbReference>
<dbReference type="GO" id="GO:0009098">
    <property type="term" value="P:L-leucine biosynthetic process"/>
    <property type="evidence" value="ECO:0007669"/>
    <property type="project" value="UniProtKB-UniRule"/>
</dbReference>
<dbReference type="CDD" id="cd01583">
    <property type="entry name" value="IPMI"/>
    <property type="match status" value="1"/>
</dbReference>
<dbReference type="FunFam" id="3.30.499.10:FF:000007">
    <property type="entry name" value="3-isopropylmalate dehydratase large subunit"/>
    <property type="match status" value="1"/>
</dbReference>
<dbReference type="Gene3D" id="3.30.499.10">
    <property type="entry name" value="Aconitase, domain 3"/>
    <property type="match status" value="2"/>
</dbReference>
<dbReference type="HAMAP" id="MF_01026">
    <property type="entry name" value="LeuC_type1"/>
    <property type="match status" value="1"/>
</dbReference>
<dbReference type="InterPro" id="IPR004430">
    <property type="entry name" value="3-IsopropMal_deHydase_lsu"/>
</dbReference>
<dbReference type="InterPro" id="IPR015931">
    <property type="entry name" value="Acnase/IPM_dHydase_lsu_aba_1/3"/>
</dbReference>
<dbReference type="InterPro" id="IPR001030">
    <property type="entry name" value="Acoase/IPM_deHydtase_lsu_aba"/>
</dbReference>
<dbReference type="InterPro" id="IPR018136">
    <property type="entry name" value="Aconitase_4Fe-4S_BS"/>
</dbReference>
<dbReference type="InterPro" id="IPR036008">
    <property type="entry name" value="Aconitase_4Fe-4S_dom"/>
</dbReference>
<dbReference type="InterPro" id="IPR050067">
    <property type="entry name" value="IPM_dehydratase_rel_enz"/>
</dbReference>
<dbReference type="InterPro" id="IPR033941">
    <property type="entry name" value="IPMI_cat"/>
</dbReference>
<dbReference type="NCBIfam" id="TIGR00170">
    <property type="entry name" value="leuC"/>
    <property type="match status" value="1"/>
</dbReference>
<dbReference type="NCBIfam" id="NF004016">
    <property type="entry name" value="PRK05478.1"/>
    <property type="match status" value="1"/>
</dbReference>
<dbReference type="NCBIfam" id="NF009116">
    <property type="entry name" value="PRK12466.1"/>
    <property type="match status" value="1"/>
</dbReference>
<dbReference type="PANTHER" id="PTHR43822:SF9">
    <property type="entry name" value="3-ISOPROPYLMALATE DEHYDRATASE"/>
    <property type="match status" value="1"/>
</dbReference>
<dbReference type="PANTHER" id="PTHR43822">
    <property type="entry name" value="HOMOACONITASE, MITOCHONDRIAL-RELATED"/>
    <property type="match status" value="1"/>
</dbReference>
<dbReference type="Pfam" id="PF00330">
    <property type="entry name" value="Aconitase"/>
    <property type="match status" value="1"/>
</dbReference>
<dbReference type="PRINTS" id="PR00415">
    <property type="entry name" value="ACONITASE"/>
</dbReference>
<dbReference type="SUPFAM" id="SSF53732">
    <property type="entry name" value="Aconitase iron-sulfur domain"/>
    <property type="match status" value="1"/>
</dbReference>
<dbReference type="PROSITE" id="PS00450">
    <property type="entry name" value="ACONITASE_1"/>
    <property type="match status" value="1"/>
</dbReference>
<dbReference type="PROSITE" id="PS01244">
    <property type="entry name" value="ACONITASE_2"/>
    <property type="match status" value="1"/>
</dbReference>
<accession>A0AK94</accession>
<proteinExistence type="inferred from homology"/>
<evidence type="ECO:0000255" key="1">
    <source>
        <dbReference type="HAMAP-Rule" id="MF_01026"/>
    </source>
</evidence>
<feature type="chain" id="PRO_1000063568" description="3-isopropylmalate dehydratase large subunit">
    <location>
        <begin position="1"/>
        <end position="462"/>
    </location>
</feature>
<feature type="binding site" evidence="1">
    <location>
        <position position="337"/>
    </location>
    <ligand>
        <name>[4Fe-4S] cluster</name>
        <dbReference type="ChEBI" id="CHEBI:49883"/>
    </ligand>
</feature>
<feature type="binding site" evidence="1">
    <location>
        <position position="397"/>
    </location>
    <ligand>
        <name>[4Fe-4S] cluster</name>
        <dbReference type="ChEBI" id="CHEBI:49883"/>
    </ligand>
</feature>
<feature type="binding site" evidence="1">
    <location>
        <position position="400"/>
    </location>
    <ligand>
        <name>[4Fe-4S] cluster</name>
        <dbReference type="ChEBI" id="CHEBI:49883"/>
    </ligand>
</feature>
<name>LEUC_LISW6</name>
<protein>
    <recommendedName>
        <fullName evidence="1">3-isopropylmalate dehydratase large subunit</fullName>
        <ecNumber evidence="1">4.2.1.33</ecNumber>
    </recommendedName>
    <alternativeName>
        <fullName evidence="1">Alpha-IPM isomerase</fullName>
        <shortName evidence="1">IPMI</shortName>
    </alternativeName>
    <alternativeName>
        <fullName evidence="1">Isopropylmalate isomerase</fullName>
    </alternativeName>
</protein>
<sequence>MGKTLFDKLWNRHVIYGKEGEPQLLYVDLHLIHEVTSPQAFEGLRMENRPLRRPDKTFATMDHNVPTEDIFNIQDLVAKKQIEALQTNCAEFGVTLADMGSDRQGIVHMVGPETGLTQPGKVIVCGDSHTATHGAFGAIGFGIGSSEVEHVFATQTIWQQKPKSMGIEIKGKLPKGVYAKDIILHLIATYGVAFGTGYAVEYYGETIQNMSMEERMTICNMAIEGGAKMGMMAPDETTFEYVRGREYAPTDMEKAISDWKTLQTDPDAEYDLHIEMDASTLEPYVTWGTNPEMGVPFSRAFPEIKDMNYERAYEYMGLKPGQKAEQIELGYVFIGSCTNARLSDLEEAARIVKGNKVKNNIRALVVPGSRQVRNAAESIGLDKIFIAAGFEWREPGCSMCLGMNPDQVPDGVHCASTSNRNFEGRQGKGARTHLVSPAMAAAAAINGHFIDIRKEAVISGGN</sequence>
<organism>
    <name type="scientific">Listeria welshimeri serovar 6b (strain ATCC 35897 / DSM 20650 / CCUG 15529 / CIP 8149 / NCTC 11857 / SLCC 5334 / V8)</name>
    <dbReference type="NCBI Taxonomy" id="386043"/>
    <lineage>
        <taxon>Bacteria</taxon>
        <taxon>Bacillati</taxon>
        <taxon>Bacillota</taxon>
        <taxon>Bacilli</taxon>
        <taxon>Bacillales</taxon>
        <taxon>Listeriaceae</taxon>
        <taxon>Listeria</taxon>
    </lineage>
</organism>
<gene>
    <name evidence="1" type="primary">leuC</name>
    <name type="ordered locus">lwe2008</name>
</gene>
<comment type="function">
    <text evidence="1">Catalyzes the isomerization between 2-isopropylmalate and 3-isopropylmalate, via the formation of 2-isopropylmaleate.</text>
</comment>
<comment type="catalytic activity">
    <reaction evidence="1">
        <text>(2R,3S)-3-isopropylmalate = (2S)-2-isopropylmalate</text>
        <dbReference type="Rhea" id="RHEA:32287"/>
        <dbReference type="ChEBI" id="CHEBI:1178"/>
        <dbReference type="ChEBI" id="CHEBI:35121"/>
        <dbReference type="EC" id="4.2.1.33"/>
    </reaction>
</comment>
<comment type="cofactor">
    <cofactor evidence="1">
        <name>[4Fe-4S] cluster</name>
        <dbReference type="ChEBI" id="CHEBI:49883"/>
    </cofactor>
    <text evidence="1">Binds 1 [4Fe-4S] cluster per subunit.</text>
</comment>
<comment type="pathway">
    <text evidence="1">Amino-acid biosynthesis; L-leucine biosynthesis; L-leucine from 3-methyl-2-oxobutanoate: step 2/4.</text>
</comment>
<comment type="subunit">
    <text evidence="1">Heterodimer of LeuC and LeuD.</text>
</comment>
<comment type="similarity">
    <text evidence="1">Belongs to the aconitase/IPM isomerase family. LeuC type 1 subfamily.</text>
</comment>
<keyword id="KW-0004">4Fe-4S</keyword>
<keyword id="KW-0028">Amino-acid biosynthesis</keyword>
<keyword id="KW-0100">Branched-chain amino acid biosynthesis</keyword>
<keyword id="KW-0408">Iron</keyword>
<keyword id="KW-0411">Iron-sulfur</keyword>
<keyword id="KW-0432">Leucine biosynthesis</keyword>
<keyword id="KW-0456">Lyase</keyword>
<keyword id="KW-0479">Metal-binding</keyword>